<reference key="1">
    <citation type="submission" date="2005-11" db="EMBL/GenBank/DDBJ databases">
        <authorList>
            <consortium name="NIH - Mammalian Gene Collection (MGC) project"/>
        </authorList>
    </citation>
    <scope>NUCLEOTIDE SEQUENCE [LARGE SCALE MRNA]</scope>
    <source>
        <strain>Crossbred X Angus</strain>
        <tissue>Liver</tissue>
    </source>
</reference>
<organism>
    <name type="scientific">Bos taurus</name>
    <name type="common">Bovine</name>
    <dbReference type="NCBI Taxonomy" id="9913"/>
    <lineage>
        <taxon>Eukaryota</taxon>
        <taxon>Metazoa</taxon>
        <taxon>Chordata</taxon>
        <taxon>Craniata</taxon>
        <taxon>Vertebrata</taxon>
        <taxon>Euteleostomi</taxon>
        <taxon>Mammalia</taxon>
        <taxon>Eutheria</taxon>
        <taxon>Laurasiatheria</taxon>
        <taxon>Artiodactyla</taxon>
        <taxon>Ruminantia</taxon>
        <taxon>Pecora</taxon>
        <taxon>Bovidae</taxon>
        <taxon>Bovinae</taxon>
        <taxon>Bos</taxon>
    </lineage>
</organism>
<feature type="initiator methionine" description="Removed" evidence="2">
    <location>
        <position position="1"/>
    </location>
</feature>
<feature type="chain" id="PRO_0000289142" description="Vacuolar protein sorting-associated protein VTA1 homolog">
    <location>
        <begin position="2"/>
        <end position="307"/>
    </location>
</feature>
<feature type="region of interest" description="Interaction with IST1" evidence="1">
    <location>
        <begin position="2"/>
        <end position="187"/>
    </location>
</feature>
<feature type="region of interest" description="Interaction with CHMP5" evidence="1">
    <location>
        <begin position="2"/>
        <end position="75"/>
    </location>
</feature>
<feature type="region of interest" description="Disordered" evidence="3">
    <location>
        <begin position="180"/>
        <end position="240"/>
    </location>
</feature>
<feature type="region of interest" description="Interaction with VPS4B" evidence="1">
    <location>
        <begin position="198"/>
        <end position="307"/>
    </location>
</feature>
<feature type="compositionally biased region" description="Low complexity" evidence="3">
    <location>
        <begin position="185"/>
        <end position="198"/>
    </location>
</feature>
<feature type="compositionally biased region" description="Polar residues" evidence="3">
    <location>
        <begin position="199"/>
        <end position="211"/>
    </location>
</feature>
<feature type="modified residue" description="N-acetylalanine" evidence="2">
    <location>
        <position position="2"/>
    </location>
</feature>
<protein>
    <recommendedName>
        <fullName>Vacuolar protein sorting-associated protein VTA1 homolog</fullName>
    </recommendedName>
</protein>
<sequence length="307" mass="34016">MAALATLPPLPPQFKSIQHHLRTAQEHDKRDPVVAYYCRLYAMQTGMKIDSKTPECRKFLSRLMDQLEALKKQLGDNEAITQEIVGSAHLENYALKMFLYADNEDRAGRFHKNMIKSFYTASLLIDVITVFGELTDENVKHRKYARWKATYIHNCLKNGETPQAGPVGIEEDNVDVEEYEDAGATSLPTQPLQPSSSTYDPSNMPSSSYTGIQIPPGAHAPANTPAEVPHSTGVTSNTIQPTPQTIPAIDPALFSTVSQGDIRLTPEDFARAQKYCKYAGSALQYEDVSTAVQNLQKALKLLTTGRE</sequence>
<accession>Q32L63</accession>
<dbReference type="EMBL" id="BC109746">
    <property type="protein sequence ID" value="AAI09747.1"/>
    <property type="molecule type" value="mRNA"/>
</dbReference>
<dbReference type="BMRB" id="Q32L63"/>
<dbReference type="SMR" id="Q32L63"/>
<dbReference type="FunCoup" id="Q32L63">
    <property type="interactions" value="4108"/>
</dbReference>
<dbReference type="STRING" id="9913.ENSBTAP00000007693"/>
<dbReference type="PaxDb" id="9913-ENSBTAP00000007693"/>
<dbReference type="eggNOG" id="KOG0917">
    <property type="taxonomic scope" value="Eukaryota"/>
</dbReference>
<dbReference type="InParanoid" id="Q32L63"/>
<dbReference type="OrthoDB" id="391137at2759"/>
<dbReference type="Proteomes" id="UP000009136">
    <property type="component" value="Unplaced"/>
</dbReference>
<dbReference type="GO" id="GO:0010008">
    <property type="term" value="C:endosome membrane"/>
    <property type="evidence" value="ECO:0007669"/>
    <property type="project" value="UniProtKB-SubCell"/>
</dbReference>
<dbReference type="GO" id="GO:0005771">
    <property type="term" value="C:multivesicular body"/>
    <property type="evidence" value="ECO:0000318"/>
    <property type="project" value="GO_Central"/>
</dbReference>
<dbReference type="GO" id="GO:0032511">
    <property type="term" value="P:late endosome to vacuole transport via multivesicular body sorting pathway"/>
    <property type="evidence" value="ECO:0000318"/>
    <property type="project" value="GO_Central"/>
</dbReference>
<dbReference type="GO" id="GO:0015031">
    <property type="term" value="P:protein transport"/>
    <property type="evidence" value="ECO:0007669"/>
    <property type="project" value="UniProtKB-KW"/>
</dbReference>
<dbReference type="FunFam" id="1.20.5.420:FF:000001">
    <property type="entry name" value="Vacuolar protein sorting-associated protein VTA1 homolog"/>
    <property type="match status" value="1"/>
</dbReference>
<dbReference type="FunFam" id="1.25.40.270:FF:000001">
    <property type="entry name" value="vacuolar protein sorting-associated protein VTA1 homolog"/>
    <property type="match status" value="1"/>
</dbReference>
<dbReference type="Gene3D" id="1.20.5.420">
    <property type="entry name" value="Immunoglobulin FC, subunit C"/>
    <property type="match status" value="1"/>
</dbReference>
<dbReference type="Gene3D" id="1.25.40.270">
    <property type="entry name" value="Vacuolar protein sorting-associated protein vta1"/>
    <property type="match status" value="1"/>
</dbReference>
<dbReference type="InterPro" id="IPR044538">
    <property type="entry name" value="Vta1-like"/>
</dbReference>
<dbReference type="InterPro" id="IPR039431">
    <property type="entry name" value="Vta1/CALS_N"/>
</dbReference>
<dbReference type="InterPro" id="IPR023175">
    <property type="entry name" value="Vta1/CALS_N_sf"/>
</dbReference>
<dbReference type="InterPro" id="IPR041212">
    <property type="entry name" value="Vta1_C"/>
</dbReference>
<dbReference type="PANTHER" id="PTHR46009">
    <property type="entry name" value="VACUOLAR PROTEIN SORTING-ASSOCIATED PROTEIN VTA1 HOMOLOG"/>
    <property type="match status" value="1"/>
</dbReference>
<dbReference type="PANTHER" id="PTHR46009:SF1">
    <property type="entry name" value="VACUOLAR PROTEIN SORTING-ASSOCIATED PROTEIN VTA1 HOMOLOG"/>
    <property type="match status" value="1"/>
</dbReference>
<dbReference type="Pfam" id="PF04652">
    <property type="entry name" value="Vta1"/>
    <property type="match status" value="1"/>
</dbReference>
<dbReference type="Pfam" id="PF18097">
    <property type="entry name" value="Vta1_C"/>
    <property type="match status" value="1"/>
</dbReference>
<evidence type="ECO:0000250" key="1"/>
<evidence type="ECO:0000250" key="2">
    <source>
        <dbReference type="UniProtKB" id="Q9NP79"/>
    </source>
</evidence>
<evidence type="ECO:0000256" key="3">
    <source>
        <dbReference type="SAM" id="MobiDB-lite"/>
    </source>
</evidence>
<evidence type="ECO:0000305" key="4"/>
<gene>
    <name type="primary">VTA1</name>
</gene>
<proteinExistence type="evidence at transcript level"/>
<keyword id="KW-0007">Acetylation</keyword>
<keyword id="KW-0963">Cytoplasm</keyword>
<keyword id="KW-0967">Endosome</keyword>
<keyword id="KW-0472">Membrane</keyword>
<keyword id="KW-0653">Protein transport</keyword>
<keyword id="KW-1185">Reference proteome</keyword>
<keyword id="KW-0813">Transport</keyword>
<name>VTA1_BOVIN</name>
<comment type="function">
    <text evidence="1">Involved in the endosomal multivesicular bodies (MVB) pathway. MVBs contain intraluminal vesicles (ILVs) that are generated by invagination and scission from the limiting membrane of the endosome and mostly are delivered to lysosomes enabling degradation of membrane proteins, such as stimulated growth factor receptors, lysosomal enzymes and lipids. Thought to be a cofactor of VPS4A/B, which catalyzes disassembles membrane-associated ESCRT-III assemblies. Involved in the sorting and down-regulation of EGFR (By similarity).</text>
</comment>
<comment type="subunit">
    <text evidence="1">Interacts with VPS4B. Interacts with CHMP1B. Interacts with CHMP2A; the interaction probably involves the open conformation of (polymerized) CHMP2A. Interacts with CHMP3. Interacts with CHMP5; the interaction involves soluble CHMP5. Interacts with IST1 (By similarity).</text>
</comment>
<comment type="subcellular location">
    <subcellularLocation>
        <location evidence="1">Cytoplasm</location>
    </subcellularLocation>
    <subcellularLocation>
        <location evidence="1">Endosome membrane</location>
        <topology evidence="1">Peripheral membrane protein</topology>
    </subcellularLocation>
</comment>
<comment type="similarity">
    <text evidence="4">Belongs to the VTA1 family.</text>
</comment>